<keyword id="KW-0170">Cobalt</keyword>
<keyword id="KW-0413">Isomerase</keyword>
<keyword id="KW-0479">Metal-binding</keyword>
<keyword id="KW-0496">Mitochondrion</keyword>
<keyword id="KW-1185">Reference proteome</keyword>
<keyword id="KW-0809">Transit peptide</keyword>
<dbReference type="EC" id="5.1.99.1"/>
<dbReference type="EMBL" id="AAFI02000013">
    <property type="protein sequence ID" value="EAL69871.1"/>
    <property type="molecule type" value="Genomic_DNA"/>
</dbReference>
<dbReference type="RefSeq" id="XP_643859.1">
    <property type="nucleotide sequence ID" value="XM_638767.1"/>
</dbReference>
<dbReference type="SMR" id="Q553V2"/>
<dbReference type="FunCoup" id="Q553V2">
    <property type="interactions" value="145"/>
</dbReference>
<dbReference type="STRING" id="44689.Q553V2"/>
<dbReference type="PaxDb" id="44689-DDB0231097"/>
<dbReference type="EnsemblProtists" id="EAL69871">
    <property type="protein sequence ID" value="EAL69871"/>
    <property type="gene ID" value="DDB_G0275181"/>
</dbReference>
<dbReference type="GeneID" id="8619910"/>
<dbReference type="KEGG" id="ddi:DDB_G0275181"/>
<dbReference type="dictyBase" id="DDB_G0275181">
    <property type="gene designation" value="mcee"/>
</dbReference>
<dbReference type="VEuPathDB" id="AmoebaDB:DDB_G0275181"/>
<dbReference type="eggNOG" id="KOG2944">
    <property type="taxonomic scope" value="Eukaryota"/>
</dbReference>
<dbReference type="HOGENOM" id="CLU_046006_5_0_1"/>
<dbReference type="InParanoid" id="Q553V2"/>
<dbReference type="OMA" id="IHHICYE"/>
<dbReference type="PhylomeDB" id="Q553V2"/>
<dbReference type="Reactome" id="R-DDI-71032">
    <property type="pathway name" value="Propionyl-CoA catabolism"/>
</dbReference>
<dbReference type="PRO" id="PR:Q553V2"/>
<dbReference type="Proteomes" id="UP000002195">
    <property type="component" value="Chromosome 2"/>
</dbReference>
<dbReference type="GO" id="GO:0005739">
    <property type="term" value="C:mitochondrion"/>
    <property type="evidence" value="ECO:0007669"/>
    <property type="project" value="UniProtKB-SubCell"/>
</dbReference>
<dbReference type="GO" id="GO:0046872">
    <property type="term" value="F:metal ion binding"/>
    <property type="evidence" value="ECO:0007669"/>
    <property type="project" value="UniProtKB-KW"/>
</dbReference>
<dbReference type="GO" id="GO:0004493">
    <property type="term" value="F:methylmalonyl-CoA epimerase activity"/>
    <property type="evidence" value="ECO:0000250"/>
    <property type="project" value="dictyBase"/>
</dbReference>
<dbReference type="GO" id="GO:0046491">
    <property type="term" value="P:L-methylmalonyl-CoA metabolic process"/>
    <property type="evidence" value="ECO:0000250"/>
    <property type="project" value="dictyBase"/>
</dbReference>
<dbReference type="CDD" id="cd07249">
    <property type="entry name" value="MMCE"/>
    <property type="match status" value="1"/>
</dbReference>
<dbReference type="FunFam" id="3.10.180.10:FF:000003">
    <property type="entry name" value="Methylmalonyl-CoA epimerase, mitochondrial"/>
    <property type="match status" value="1"/>
</dbReference>
<dbReference type="Gene3D" id="3.10.180.10">
    <property type="entry name" value="2,3-Dihydroxybiphenyl 1,2-Dioxygenase, domain 1"/>
    <property type="match status" value="1"/>
</dbReference>
<dbReference type="InterPro" id="IPR029068">
    <property type="entry name" value="Glyas_Bleomycin-R_OHBP_Dase"/>
</dbReference>
<dbReference type="InterPro" id="IPR017515">
    <property type="entry name" value="MeMalonyl-CoA_epimerase"/>
</dbReference>
<dbReference type="InterPro" id="IPR051785">
    <property type="entry name" value="MMCE/EMCE_epimerase"/>
</dbReference>
<dbReference type="InterPro" id="IPR037523">
    <property type="entry name" value="VOC"/>
</dbReference>
<dbReference type="NCBIfam" id="TIGR03081">
    <property type="entry name" value="metmalonyl_epim"/>
    <property type="match status" value="1"/>
</dbReference>
<dbReference type="PANTHER" id="PTHR43048">
    <property type="entry name" value="METHYLMALONYL-COA EPIMERASE"/>
    <property type="match status" value="1"/>
</dbReference>
<dbReference type="PANTHER" id="PTHR43048:SF3">
    <property type="entry name" value="METHYLMALONYL-COA EPIMERASE, MITOCHONDRIAL"/>
    <property type="match status" value="1"/>
</dbReference>
<dbReference type="Pfam" id="PF13669">
    <property type="entry name" value="Glyoxalase_4"/>
    <property type="match status" value="1"/>
</dbReference>
<dbReference type="SUPFAM" id="SSF54593">
    <property type="entry name" value="Glyoxalase/Bleomycin resistance protein/Dihydroxybiphenyl dioxygenase"/>
    <property type="match status" value="1"/>
</dbReference>
<dbReference type="PROSITE" id="PS51819">
    <property type="entry name" value="VOC"/>
    <property type="match status" value="1"/>
</dbReference>
<name>MCEE_DICDI</name>
<comment type="function">
    <text evidence="2">Methylmalonyl-CoA epimerase involved in propionyl-CoA metabolism.</text>
</comment>
<comment type="catalytic activity">
    <reaction evidence="2">
        <text>(R)-methylmalonyl-CoA = (S)-methylmalonyl-CoA</text>
        <dbReference type="Rhea" id="RHEA:20553"/>
        <dbReference type="ChEBI" id="CHEBI:57326"/>
        <dbReference type="ChEBI" id="CHEBI:57327"/>
        <dbReference type="EC" id="5.1.99.1"/>
    </reaction>
    <physiologicalReaction direction="right-to-left" evidence="2">
        <dbReference type="Rhea" id="RHEA:20555"/>
    </physiologicalReaction>
</comment>
<comment type="subcellular location">
    <subcellularLocation>
        <location evidence="1">Mitochondrion</location>
    </subcellularLocation>
</comment>
<comment type="similarity">
    <text evidence="5">Belongs to the methylmalonyl-CoA epimerase family.</text>
</comment>
<sequence>MFKQLIKTTLTNSRSFSTNTGSGSKIGNIIGKIGIGKLNHVAIATPNLQESMDLYKNVFGADVSEPVNQVEHGVTTVFVGLENTKIELLHPFGDKSPIENFLKKNPSGGIHHICLEVDDIHHAVKTLLAENVRIIDPTPKIGAHGKPVVFLHPKSMNGVLVELEEK</sequence>
<organism>
    <name type="scientific">Dictyostelium discoideum</name>
    <name type="common">Social amoeba</name>
    <dbReference type="NCBI Taxonomy" id="44689"/>
    <lineage>
        <taxon>Eukaryota</taxon>
        <taxon>Amoebozoa</taxon>
        <taxon>Evosea</taxon>
        <taxon>Eumycetozoa</taxon>
        <taxon>Dictyostelia</taxon>
        <taxon>Dictyosteliales</taxon>
        <taxon>Dictyosteliaceae</taxon>
        <taxon>Dictyostelium</taxon>
    </lineage>
</organism>
<evidence type="ECO:0000250" key="1"/>
<evidence type="ECO:0000250" key="2">
    <source>
        <dbReference type="UniProtKB" id="Q96PE7"/>
    </source>
</evidence>
<evidence type="ECO:0000255" key="3"/>
<evidence type="ECO:0000255" key="4">
    <source>
        <dbReference type="PROSITE-ProRule" id="PRU01163"/>
    </source>
</evidence>
<evidence type="ECO:0000305" key="5"/>
<protein>
    <recommendedName>
        <fullName evidence="2 5">Methylmalonyl-CoA epimerase, mitochondrial</fullName>
        <ecNumber>5.1.99.1</ecNumber>
    </recommendedName>
    <alternativeName>
        <fullName>DL-methylmalonyl-CoA racemase</fullName>
    </alternativeName>
</protein>
<gene>
    <name type="primary">mcee</name>
    <name type="ORF">DDB_G0275181</name>
</gene>
<reference key="1">
    <citation type="journal article" date="2002" name="Nature">
        <title>Sequence and analysis of chromosome 2 of Dictyostelium discoideum.</title>
        <authorList>
            <person name="Gloeckner G."/>
            <person name="Eichinger L."/>
            <person name="Szafranski K."/>
            <person name="Pachebat J.A."/>
            <person name="Bankier A.T."/>
            <person name="Dear P.H."/>
            <person name="Lehmann R."/>
            <person name="Baumgart C."/>
            <person name="Parra G."/>
            <person name="Abril J.F."/>
            <person name="Guigo R."/>
            <person name="Kumpf K."/>
            <person name="Tunggal B."/>
            <person name="Cox E.C."/>
            <person name="Quail M.A."/>
            <person name="Platzer M."/>
            <person name="Rosenthal A."/>
            <person name="Noegel A.A."/>
        </authorList>
    </citation>
    <scope>NUCLEOTIDE SEQUENCE [LARGE SCALE GENOMIC DNA]</scope>
    <source>
        <strain>AX4</strain>
    </source>
</reference>
<reference key="2">
    <citation type="journal article" date="2005" name="Nature">
        <title>The genome of the social amoeba Dictyostelium discoideum.</title>
        <authorList>
            <person name="Eichinger L."/>
            <person name="Pachebat J.A."/>
            <person name="Gloeckner G."/>
            <person name="Rajandream M.A."/>
            <person name="Sucgang R."/>
            <person name="Berriman M."/>
            <person name="Song J."/>
            <person name="Olsen R."/>
            <person name="Szafranski K."/>
            <person name="Xu Q."/>
            <person name="Tunggal B."/>
            <person name="Kummerfeld S."/>
            <person name="Madera M."/>
            <person name="Konfortov B.A."/>
            <person name="Rivero F."/>
            <person name="Bankier A.T."/>
            <person name="Lehmann R."/>
            <person name="Hamlin N."/>
            <person name="Davies R."/>
            <person name="Gaudet P."/>
            <person name="Fey P."/>
            <person name="Pilcher K."/>
            <person name="Chen G."/>
            <person name="Saunders D."/>
            <person name="Sodergren E.J."/>
            <person name="Davis P."/>
            <person name="Kerhornou A."/>
            <person name="Nie X."/>
            <person name="Hall N."/>
            <person name="Anjard C."/>
            <person name="Hemphill L."/>
            <person name="Bason N."/>
            <person name="Farbrother P."/>
            <person name="Desany B."/>
            <person name="Just E."/>
            <person name="Morio T."/>
            <person name="Rost R."/>
            <person name="Churcher C.M."/>
            <person name="Cooper J."/>
            <person name="Haydock S."/>
            <person name="van Driessche N."/>
            <person name="Cronin A."/>
            <person name="Goodhead I."/>
            <person name="Muzny D.M."/>
            <person name="Mourier T."/>
            <person name="Pain A."/>
            <person name="Lu M."/>
            <person name="Harper D."/>
            <person name="Lindsay R."/>
            <person name="Hauser H."/>
            <person name="James K.D."/>
            <person name="Quiles M."/>
            <person name="Madan Babu M."/>
            <person name="Saito T."/>
            <person name="Buchrieser C."/>
            <person name="Wardroper A."/>
            <person name="Felder M."/>
            <person name="Thangavelu M."/>
            <person name="Johnson D."/>
            <person name="Knights A."/>
            <person name="Loulseged H."/>
            <person name="Mungall K.L."/>
            <person name="Oliver K."/>
            <person name="Price C."/>
            <person name="Quail M.A."/>
            <person name="Urushihara H."/>
            <person name="Hernandez J."/>
            <person name="Rabbinowitsch E."/>
            <person name="Steffen D."/>
            <person name="Sanders M."/>
            <person name="Ma J."/>
            <person name="Kohara Y."/>
            <person name="Sharp S."/>
            <person name="Simmonds M.N."/>
            <person name="Spiegler S."/>
            <person name="Tivey A."/>
            <person name="Sugano S."/>
            <person name="White B."/>
            <person name="Walker D."/>
            <person name="Woodward J.R."/>
            <person name="Winckler T."/>
            <person name="Tanaka Y."/>
            <person name="Shaulsky G."/>
            <person name="Schleicher M."/>
            <person name="Weinstock G.M."/>
            <person name="Rosenthal A."/>
            <person name="Cox E.C."/>
            <person name="Chisholm R.L."/>
            <person name="Gibbs R.A."/>
            <person name="Loomis W.F."/>
            <person name="Platzer M."/>
            <person name="Kay R.R."/>
            <person name="Williams J.G."/>
            <person name="Dear P.H."/>
            <person name="Noegel A.A."/>
            <person name="Barrell B.G."/>
            <person name="Kuspa A."/>
        </authorList>
    </citation>
    <scope>NUCLEOTIDE SEQUENCE [LARGE SCALE GENOMIC DNA]</scope>
    <source>
        <strain>AX4</strain>
    </source>
</reference>
<feature type="transit peptide" description="Mitochondrion" evidence="3">
    <location>
        <begin position="1"/>
        <end position="23"/>
    </location>
</feature>
<feature type="chain" id="PRO_0000327653" description="Methylmalonyl-CoA epimerase, mitochondrial">
    <location>
        <begin position="24"/>
        <end position="166"/>
    </location>
</feature>
<feature type="domain" description="VOC" evidence="4">
    <location>
        <begin position="37"/>
        <end position="166"/>
    </location>
</feature>
<feature type="binding site" evidence="1">
    <location>
        <position position="40"/>
    </location>
    <ligand>
        <name>Co(2+)</name>
        <dbReference type="ChEBI" id="CHEBI:48828"/>
    </ligand>
</feature>
<feature type="binding site" evidence="1">
    <location>
        <position position="112"/>
    </location>
    <ligand>
        <name>Co(2+)</name>
        <dbReference type="ChEBI" id="CHEBI:48828"/>
    </ligand>
</feature>
<feature type="binding site" evidence="1">
    <location>
        <position position="162"/>
    </location>
    <ligand>
        <name>Co(2+)</name>
        <dbReference type="ChEBI" id="CHEBI:48828"/>
    </ligand>
</feature>
<accession>Q553V2</accession>
<accession>Q86I72</accession>
<proteinExistence type="inferred from homology"/>